<comment type="function">
    <text evidence="1">Functions in the biosynthesis of branched-chain amino acids. Catalyzes the dehydration of (2R,3R)-2,3-dihydroxy-3-methylpentanoate (2,3-dihydroxy-3-methylvalerate) into 2-oxo-3-methylpentanoate (2-oxo-3-methylvalerate) and of (2R)-2,3-dihydroxy-3-methylbutanoate (2,3-dihydroxyisovalerate) into 2-oxo-3-methylbutanoate (2-oxoisovalerate), the penultimate precursor to L-isoleucine and L-valine, respectively.</text>
</comment>
<comment type="catalytic activity">
    <reaction evidence="1">
        <text>(2R)-2,3-dihydroxy-3-methylbutanoate = 3-methyl-2-oxobutanoate + H2O</text>
        <dbReference type="Rhea" id="RHEA:24809"/>
        <dbReference type="ChEBI" id="CHEBI:11851"/>
        <dbReference type="ChEBI" id="CHEBI:15377"/>
        <dbReference type="ChEBI" id="CHEBI:49072"/>
        <dbReference type="EC" id="4.2.1.9"/>
    </reaction>
    <physiologicalReaction direction="left-to-right" evidence="1">
        <dbReference type="Rhea" id="RHEA:24810"/>
    </physiologicalReaction>
</comment>
<comment type="catalytic activity">
    <reaction evidence="1">
        <text>(2R,3R)-2,3-dihydroxy-3-methylpentanoate = (S)-3-methyl-2-oxopentanoate + H2O</text>
        <dbReference type="Rhea" id="RHEA:27694"/>
        <dbReference type="ChEBI" id="CHEBI:15377"/>
        <dbReference type="ChEBI" id="CHEBI:35146"/>
        <dbReference type="ChEBI" id="CHEBI:49258"/>
        <dbReference type="EC" id="4.2.1.9"/>
    </reaction>
    <physiologicalReaction direction="left-to-right" evidence="1">
        <dbReference type="Rhea" id="RHEA:27695"/>
    </physiologicalReaction>
</comment>
<comment type="cofactor">
    <cofactor evidence="1">
        <name>[2Fe-2S] cluster</name>
        <dbReference type="ChEBI" id="CHEBI:190135"/>
    </cofactor>
    <text evidence="1">Binds 1 [2Fe-2S] cluster per subunit. This cluster acts as a Lewis acid cofactor.</text>
</comment>
<comment type="cofactor">
    <cofactor evidence="1">
        <name>Mg(2+)</name>
        <dbReference type="ChEBI" id="CHEBI:18420"/>
    </cofactor>
</comment>
<comment type="pathway">
    <text evidence="1">Amino-acid biosynthesis; L-isoleucine biosynthesis; L-isoleucine from 2-oxobutanoate: step 3/4.</text>
</comment>
<comment type="pathway">
    <text evidence="1">Amino-acid biosynthesis; L-valine biosynthesis; L-valine from pyruvate: step 3/4.</text>
</comment>
<comment type="subunit">
    <text evidence="1">Homodimer.</text>
</comment>
<comment type="similarity">
    <text evidence="1">Belongs to the IlvD/Edd family.</text>
</comment>
<reference key="1">
    <citation type="journal article" date="2009" name="Proc. Natl. Acad. Sci. U.S.A.">
        <title>Biogeography of the Sulfolobus islandicus pan-genome.</title>
        <authorList>
            <person name="Reno M.L."/>
            <person name="Held N.L."/>
            <person name="Fields C.J."/>
            <person name="Burke P.V."/>
            <person name="Whitaker R.J."/>
        </authorList>
    </citation>
    <scope>NUCLEOTIDE SEQUENCE [LARGE SCALE GENOMIC DNA]</scope>
    <source>
        <strain>L.S.2.15 / Lassen #1</strain>
    </source>
</reference>
<evidence type="ECO:0000255" key="1">
    <source>
        <dbReference type="HAMAP-Rule" id="MF_00012"/>
    </source>
</evidence>
<name>ILVD_SACI2</name>
<keyword id="KW-0001">2Fe-2S</keyword>
<keyword id="KW-0028">Amino-acid biosynthesis</keyword>
<keyword id="KW-0100">Branched-chain amino acid biosynthesis</keyword>
<keyword id="KW-0408">Iron</keyword>
<keyword id="KW-0411">Iron-sulfur</keyword>
<keyword id="KW-0456">Lyase</keyword>
<keyword id="KW-0460">Magnesium</keyword>
<keyword id="KW-0479">Metal-binding</keyword>
<dbReference type="EC" id="4.2.1.9" evidence="1"/>
<dbReference type="EMBL" id="CP001399">
    <property type="protein sequence ID" value="ACP36395.1"/>
    <property type="molecule type" value="Genomic_DNA"/>
</dbReference>
<dbReference type="RefSeq" id="WP_012714307.1">
    <property type="nucleotide sequence ID" value="NC_012589.1"/>
</dbReference>
<dbReference type="SMR" id="C3MKM4"/>
<dbReference type="GeneID" id="7798409"/>
<dbReference type="KEGG" id="sis:LS215_2424"/>
<dbReference type="HOGENOM" id="CLU_014271_4_2_2"/>
<dbReference type="OrthoDB" id="8674at2157"/>
<dbReference type="UniPathway" id="UPA00047">
    <property type="reaction ID" value="UER00057"/>
</dbReference>
<dbReference type="UniPathway" id="UPA00049">
    <property type="reaction ID" value="UER00061"/>
</dbReference>
<dbReference type="Proteomes" id="UP000001747">
    <property type="component" value="Chromosome"/>
</dbReference>
<dbReference type="GO" id="GO:0051537">
    <property type="term" value="F:2 iron, 2 sulfur cluster binding"/>
    <property type="evidence" value="ECO:0007669"/>
    <property type="project" value="UniProtKB-UniRule"/>
</dbReference>
<dbReference type="GO" id="GO:0004160">
    <property type="term" value="F:dihydroxy-acid dehydratase activity"/>
    <property type="evidence" value="ECO:0007669"/>
    <property type="project" value="UniProtKB-UniRule"/>
</dbReference>
<dbReference type="GO" id="GO:0000287">
    <property type="term" value="F:magnesium ion binding"/>
    <property type="evidence" value="ECO:0007669"/>
    <property type="project" value="UniProtKB-UniRule"/>
</dbReference>
<dbReference type="GO" id="GO:0009097">
    <property type="term" value="P:isoleucine biosynthetic process"/>
    <property type="evidence" value="ECO:0007669"/>
    <property type="project" value="UniProtKB-UniRule"/>
</dbReference>
<dbReference type="GO" id="GO:0009099">
    <property type="term" value="P:L-valine biosynthetic process"/>
    <property type="evidence" value="ECO:0007669"/>
    <property type="project" value="UniProtKB-UniRule"/>
</dbReference>
<dbReference type="FunFam" id="3.50.30.80:FF:000001">
    <property type="entry name" value="Dihydroxy-acid dehydratase"/>
    <property type="match status" value="1"/>
</dbReference>
<dbReference type="Gene3D" id="3.50.30.80">
    <property type="entry name" value="IlvD/EDD C-terminal domain-like"/>
    <property type="match status" value="1"/>
</dbReference>
<dbReference type="HAMAP" id="MF_00012">
    <property type="entry name" value="IlvD"/>
    <property type="match status" value="1"/>
</dbReference>
<dbReference type="InterPro" id="IPR050165">
    <property type="entry name" value="DHAD_IlvD/Edd"/>
</dbReference>
<dbReference type="InterPro" id="IPR042096">
    <property type="entry name" value="Dihydro-acid_dehy_C"/>
</dbReference>
<dbReference type="InterPro" id="IPR004404">
    <property type="entry name" value="DihydroxyA_deHydtase"/>
</dbReference>
<dbReference type="InterPro" id="IPR020558">
    <property type="entry name" value="DiOHA_6PGluconate_deHydtase_CS"/>
</dbReference>
<dbReference type="InterPro" id="IPR056740">
    <property type="entry name" value="ILV_EDD_C"/>
</dbReference>
<dbReference type="InterPro" id="IPR000581">
    <property type="entry name" value="ILV_EDD_N"/>
</dbReference>
<dbReference type="InterPro" id="IPR037237">
    <property type="entry name" value="IlvD/EDD_N"/>
</dbReference>
<dbReference type="NCBIfam" id="TIGR00110">
    <property type="entry name" value="ilvD"/>
    <property type="match status" value="1"/>
</dbReference>
<dbReference type="NCBIfam" id="NF002068">
    <property type="entry name" value="PRK00911.1"/>
    <property type="match status" value="1"/>
</dbReference>
<dbReference type="PANTHER" id="PTHR21000">
    <property type="entry name" value="DIHYDROXY-ACID DEHYDRATASE DAD"/>
    <property type="match status" value="1"/>
</dbReference>
<dbReference type="PANTHER" id="PTHR21000:SF5">
    <property type="entry name" value="DIHYDROXY-ACID DEHYDRATASE, MITOCHONDRIAL"/>
    <property type="match status" value="1"/>
</dbReference>
<dbReference type="Pfam" id="PF24877">
    <property type="entry name" value="ILV_EDD_C"/>
    <property type="match status" value="1"/>
</dbReference>
<dbReference type="Pfam" id="PF00920">
    <property type="entry name" value="ILVD_EDD_N"/>
    <property type="match status" value="1"/>
</dbReference>
<dbReference type="SUPFAM" id="SSF143975">
    <property type="entry name" value="IlvD/EDD N-terminal domain-like"/>
    <property type="match status" value="1"/>
</dbReference>
<dbReference type="SUPFAM" id="SSF52016">
    <property type="entry name" value="LeuD/IlvD-like"/>
    <property type="match status" value="1"/>
</dbReference>
<dbReference type="PROSITE" id="PS00886">
    <property type="entry name" value="ILVD_EDD_1"/>
    <property type="match status" value="1"/>
</dbReference>
<dbReference type="PROSITE" id="PS00887">
    <property type="entry name" value="ILVD_EDD_2"/>
    <property type="match status" value="1"/>
</dbReference>
<organism>
    <name type="scientific">Saccharolobus islandicus (strain L.S.2.15 / Lassen #1)</name>
    <name type="common">Sulfolobus islandicus</name>
    <dbReference type="NCBI Taxonomy" id="429572"/>
    <lineage>
        <taxon>Archaea</taxon>
        <taxon>Thermoproteota</taxon>
        <taxon>Thermoprotei</taxon>
        <taxon>Sulfolobales</taxon>
        <taxon>Sulfolobaceae</taxon>
        <taxon>Saccharolobus</taxon>
    </lineage>
</organism>
<gene>
    <name evidence="1" type="primary">ilvD</name>
    <name type="ordered locus">LS215_2424</name>
</gene>
<proteinExistence type="inferred from homology"/>
<accession>C3MKM4</accession>
<feature type="chain" id="PRO_1000201785" description="Dihydroxy-acid dehydratase">
    <location>
        <begin position="1"/>
        <end position="558"/>
    </location>
</feature>
<feature type="active site" description="Proton acceptor" evidence="1">
    <location>
        <position position="472"/>
    </location>
</feature>
<feature type="binding site" evidence="1">
    <location>
        <position position="50"/>
    </location>
    <ligand>
        <name>[2Fe-2S] cluster</name>
        <dbReference type="ChEBI" id="CHEBI:190135"/>
    </ligand>
</feature>
<feature type="binding site" evidence="1">
    <location>
        <position position="82"/>
    </location>
    <ligand>
        <name>Mg(2+)</name>
        <dbReference type="ChEBI" id="CHEBI:18420"/>
    </ligand>
</feature>
<feature type="binding site" evidence="1">
    <location>
        <position position="123"/>
    </location>
    <ligand>
        <name>[2Fe-2S] cluster</name>
        <dbReference type="ChEBI" id="CHEBI:190135"/>
    </ligand>
</feature>
<feature type="binding site" evidence="1">
    <location>
        <position position="124"/>
    </location>
    <ligand>
        <name>Mg(2+)</name>
        <dbReference type="ChEBI" id="CHEBI:18420"/>
    </ligand>
</feature>
<feature type="binding site" description="via carbamate group" evidence="1">
    <location>
        <position position="125"/>
    </location>
    <ligand>
        <name>Mg(2+)</name>
        <dbReference type="ChEBI" id="CHEBI:18420"/>
    </ligand>
</feature>
<feature type="binding site" evidence="1">
    <location>
        <position position="195"/>
    </location>
    <ligand>
        <name>[2Fe-2S] cluster</name>
        <dbReference type="ChEBI" id="CHEBI:190135"/>
    </ligand>
</feature>
<feature type="binding site" evidence="1">
    <location>
        <position position="447"/>
    </location>
    <ligand>
        <name>Mg(2+)</name>
        <dbReference type="ChEBI" id="CHEBI:18420"/>
    </ligand>
</feature>
<feature type="modified residue" description="N6-carboxylysine" evidence="1">
    <location>
        <position position="125"/>
    </location>
</feature>
<sequence>MPAKLNSPSRYHGIYNAPHRAFLRSVGLTDEEIGKPLVAIATAWSEAGPCNFHALALARVAKEGTKEAGLSPLAFPTMVVNDNIGMGSEGMRYSLVSRDLIADMVEAQFNAHAFDGLVGIGGCDKTTPGILMAMARLNVPSIYIYGGSAEPGYFMGKRLTIEDVHEAIGAYLAKRITENELYEIEKRAHPTLGTCSGLFTANTMGSMSEALGMALPGSASPTATSSRRVMYVKETGKALGSLIENGIKSREILTFEAFENAITTLMAMGGSTNAVLHLLAIAYEAGVKLTLDDFNRISKRTPYIASMKPGGDYVMADLDEVGGVPVVLKKLLDAGLLHGDVLTVTGKTMKQNLEQYKYPNVPHSHIVRDVKNPIKPRGGIVILKGSLAPEGAVIKVAATNVVKFEGKAKVYNSEDDAFKGVQSGEVSEGEVVIIRYEGPKGAPGMPEMLRVTAAIMGAGLNNVALVTDGRFSGATRGPMVGHVAPEAMVGGPIAIVEDGDTIVIDVESERLDLKLSEEEIRNRLKRWSPPSPRYKSGLLAKYASLVSQASMGAVTRPA</sequence>
<protein>
    <recommendedName>
        <fullName evidence="1">Dihydroxy-acid dehydratase</fullName>
        <shortName evidence="1">DAD</shortName>
        <ecNumber evidence="1">4.2.1.9</ecNumber>
    </recommendedName>
</protein>